<reference key="1">
    <citation type="submission" date="2008-12" db="EMBL/GenBank/DDBJ databases">
        <title>Complete sequence of chromosome of Shewanella baltica OS223.</title>
        <authorList>
            <consortium name="US DOE Joint Genome Institute"/>
            <person name="Lucas S."/>
            <person name="Copeland A."/>
            <person name="Lapidus A."/>
            <person name="Glavina del Rio T."/>
            <person name="Dalin E."/>
            <person name="Tice H."/>
            <person name="Bruce D."/>
            <person name="Goodwin L."/>
            <person name="Pitluck S."/>
            <person name="Chertkov O."/>
            <person name="Meincke L."/>
            <person name="Brettin T."/>
            <person name="Detter J.C."/>
            <person name="Han C."/>
            <person name="Kuske C.R."/>
            <person name="Larimer F."/>
            <person name="Land M."/>
            <person name="Hauser L."/>
            <person name="Kyrpides N."/>
            <person name="Ovchinnikova G."/>
            <person name="Brettar I."/>
            <person name="Rodrigues J."/>
            <person name="Konstantinidis K."/>
            <person name="Tiedje J."/>
        </authorList>
    </citation>
    <scope>NUCLEOTIDE SEQUENCE [LARGE SCALE GENOMIC DNA]</scope>
    <source>
        <strain>OS223</strain>
    </source>
</reference>
<feature type="chain" id="PRO_1000123158" description="dCTP deaminase">
    <location>
        <begin position="1"/>
        <end position="193"/>
    </location>
</feature>
<feature type="region of interest" description="Disordered" evidence="2">
    <location>
        <begin position="174"/>
        <end position="193"/>
    </location>
</feature>
<feature type="active site" description="Proton donor/acceptor" evidence="1">
    <location>
        <position position="138"/>
    </location>
</feature>
<feature type="binding site" evidence="1">
    <location>
        <begin position="110"/>
        <end position="115"/>
    </location>
    <ligand>
        <name>dCTP</name>
        <dbReference type="ChEBI" id="CHEBI:61481"/>
    </ligand>
</feature>
<feature type="binding site" evidence="1">
    <location>
        <position position="128"/>
    </location>
    <ligand>
        <name>dCTP</name>
        <dbReference type="ChEBI" id="CHEBI:61481"/>
    </ligand>
</feature>
<feature type="binding site" evidence="1">
    <location>
        <begin position="136"/>
        <end position="138"/>
    </location>
    <ligand>
        <name>dCTP</name>
        <dbReference type="ChEBI" id="CHEBI:61481"/>
    </ligand>
</feature>
<feature type="binding site" evidence="1">
    <location>
        <position position="171"/>
    </location>
    <ligand>
        <name>dCTP</name>
        <dbReference type="ChEBI" id="CHEBI:61481"/>
    </ligand>
</feature>
<feature type="binding site" evidence="1">
    <location>
        <position position="178"/>
    </location>
    <ligand>
        <name>dCTP</name>
        <dbReference type="ChEBI" id="CHEBI:61481"/>
    </ligand>
</feature>
<feature type="binding site" evidence="1">
    <location>
        <position position="182"/>
    </location>
    <ligand>
        <name>dCTP</name>
        <dbReference type="ChEBI" id="CHEBI:61481"/>
    </ligand>
</feature>
<protein>
    <recommendedName>
        <fullName evidence="1">dCTP deaminase</fullName>
        <ecNumber evidence="1">3.5.4.13</ecNumber>
    </recommendedName>
    <alternativeName>
        <fullName evidence="1">Deoxycytidine triphosphate deaminase</fullName>
    </alternativeName>
</protein>
<sequence length="193" mass="21305">MRLTDIEIEQALDNGTIVIEPRPGIEAISGVSVDVRLGGQFRVFKDHTAPYIDLSGPSVEMQAALDRVMSEIIEIPDGEAFFLHPGELALAVTYESVTLPADIVGWLDGRSSLARLGLMVHVTAHRIDPGWQGKIVLEFYNSGKLPLALRPRMTIGALNFERLNHAVARPYNTRKSAKYKDQQEAVASRISQD</sequence>
<name>DCD_SHEB2</name>
<keyword id="KW-0378">Hydrolase</keyword>
<keyword id="KW-0546">Nucleotide metabolism</keyword>
<keyword id="KW-0547">Nucleotide-binding</keyword>
<proteinExistence type="inferred from homology"/>
<evidence type="ECO:0000255" key="1">
    <source>
        <dbReference type="HAMAP-Rule" id="MF_00146"/>
    </source>
</evidence>
<evidence type="ECO:0000256" key="2">
    <source>
        <dbReference type="SAM" id="MobiDB-lite"/>
    </source>
</evidence>
<organism>
    <name type="scientific">Shewanella baltica (strain OS223)</name>
    <dbReference type="NCBI Taxonomy" id="407976"/>
    <lineage>
        <taxon>Bacteria</taxon>
        <taxon>Pseudomonadati</taxon>
        <taxon>Pseudomonadota</taxon>
        <taxon>Gammaproteobacteria</taxon>
        <taxon>Alteromonadales</taxon>
        <taxon>Shewanellaceae</taxon>
        <taxon>Shewanella</taxon>
    </lineage>
</organism>
<dbReference type="EC" id="3.5.4.13" evidence="1"/>
<dbReference type="EMBL" id="CP001252">
    <property type="protein sequence ID" value="ACK46394.1"/>
    <property type="molecule type" value="Genomic_DNA"/>
</dbReference>
<dbReference type="RefSeq" id="WP_006081925.1">
    <property type="nucleotide sequence ID" value="NC_011663.1"/>
</dbReference>
<dbReference type="SMR" id="B8E961"/>
<dbReference type="GeneID" id="11772674"/>
<dbReference type="KEGG" id="sbp:Sbal223_1889"/>
<dbReference type="HOGENOM" id="CLU_087476_2_0_6"/>
<dbReference type="UniPathway" id="UPA00610">
    <property type="reaction ID" value="UER00665"/>
</dbReference>
<dbReference type="Proteomes" id="UP000002507">
    <property type="component" value="Chromosome"/>
</dbReference>
<dbReference type="GO" id="GO:0008829">
    <property type="term" value="F:dCTP deaminase activity"/>
    <property type="evidence" value="ECO:0007669"/>
    <property type="project" value="UniProtKB-UniRule"/>
</dbReference>
<dbReference type="GO" id="GO:0000166">
    <property type="term" value="F:nucleotide binding"/>
    <property type="evidence" value="ECO:0007669"/>
    <property type="project" value="UniProtKB-KW"/>
</dbReference>
<dbReference type="GO" id="GO:0006226">
    <property type="term" value="P:dUMP biosynthetic process"/>
    <property type="evidence" value="ECO:0007669"/>
    <property type="project" value="UniProtKB-UniPathway"/>
</dbReference>
<dbReference type="GO" id="GO:0006229">
    <property type="term" value="P:dUTP biosynthetic process"/>
    <property type="evidence" value="ECO:0007669"/>
    <property type="project" value="UniProtKB-UniRule"/>
</dbReference>
<dbReference type="GO" id="GO:0015949">
    <property type="term" value="P:nucleobase-containing small molecule interconversion"/>
    <property type="evidence" value="ECO:0007669"/>
    <property type="project" value="TreeGrafter"/>
</dbReference>
<dbReference type="CDD" id="cd07557">
    <property type="entry name" value="trimeric_dUTPase"/>
    <property type="match status" value="1"/>
</dbReference>
<dbReference type="FunFam" id="2.70.40.10:FF:000003">
    <property type="entry name" value="dCTP deaminase"/>
    <property type="match status" value="1"/>
</dbReference>
<dbReference type="Gene3D" id="2.70.40.10">
    <property type="match status" value="1"/>
</dbReference>
<dbReference type="HAMAP" id="MF_00146">
    <property type="entry name" value="dCTP_deaminase"/>
    <property type="match status" value="1"/>
</dbReference>
<dbReference type="InterPro" id="IPR011962">
    <property type="entry name" value="dCTP_deaminase"/>
</dbReference>
<dbReference type="InterPro" id="IPR036157">
    <property type="entry name" value="dUTPase-like_sf"/>
</dbReference>
<dbReference type="InterPro" id="IPR033704">
    <property type="entry name" value="dUTPase_trimeric"/>
</dbReference>
<dbReference type="NCBIfam" id="TIGR02274">
    <property type="entry name" value="dCTP_deam"/>
    <property type="match status" value="1"/>
</dbReference>
<dbReference type="PANTHER" id="PTHR42680">
    <property type="entry name" value="DCTP DEAMINASE"/>
    <property type="match status" value="1"/>
</dbReference>
<dbReference type="PANTHER" id="PTHR42680:SF3">
    <property type="entry name" value="DCTP DEAMINASE"/>
    <property type="match status" value="1"/>
</dbReference>
<dbReference type="Pfam" id="PF22769">
    <property type="entry name" value="DCD"/>
    <property type="match status" value="1"/>
</dbReference>
<dbReference type="SUPFAM" id="SSF51283">
    <property type="entry name" value="dUTPase-like"/>
    <property type="match status" value="1"/>
</dbReference>
<gene>
    <name evidence="1" type="primary">dcd</name>
    <name type="ordered locus">Sbal223_1889</name>
</gene>
<comment type="function">
    <text evidence="1">Catalyzes the deamination of dCTP to dUTP.</text>
</comment>
<comment type="catalytic activity">
    <reaction evidence="1">
        <text>dCTP + H2O + H(+) = dUTP + NH4(+)</text>
        <dbReference type="Rhea" id="RHEA:22680"/>
        <dbReference type="ChEBI" id="CHEBI:15377"/>
        <dbReference type="ChEBI" id="CHEBI:15378"/>
        <dbReference type="ChEBI" id="CHEBI:28938"/>
        <dbReference type="ChEBI" id="CHEBI:61481"/>
        <dbReference type="ChEBI" id="CHEBI:61555"/>
        <dbReference type="EC" id="3.5.4.13"/>
    </reaction>
</comment>
<comment type="pathway">
    <text evidence="1">Pyrimidine metabolism; dUMP biosynthesis; dUMP from dCTP (dUTP route): step 1/2.</text>
</comment>
<comment type="subunit">
    <text evidence="1">Homotrimer.</text>
</comment>
<comment type="similarity">
    <text evidence="1">Belongs to the dCTP deaminase family.</text>
</comment>
<accession>B8E961</accession>